<dbReference type="EMBL" id="EF380351">
    <property type="protein sequence ID" value="ABQ45292.1"/>
    <property type="molecule type" value="Genomic_DNA"/>
</dbReference>
<dbReference type="EMBL" id="EF380351">
    <property type="protein sequence ID" value="ABQ45312.1"/>
    <property type="molecule type" value="Genomic_DNA"/>
</dbReference>
<dbReference type="GO" id="GO:0009570">
    <property type="term" value="C:chloroplast stroma"/>
    <property type="evidence" value="ECO:0007669"/>
    <property type="project" value="UniProtKB-SubCell"/>
</dbReference>
<dbReference type="GO" id="GO:0005524">
    <property type="term" value="F:ATP binding"/>
    <property type="evidence" value="ECO:0007669"/>
    <property type="project" value="UniProtKB-KW"/>
</dbReference>
<dbReference type="GO" id="GO:0016887">
    <property type="term" value="F:ATP hydrolysis activity"/>
    <property type="evidence" value="ECO:0007669"/>
    <property type="project" value="InterPro"/>
</dbReference>
<dbReference type="CDD" id="cd19505">
    <property type="entry name" value="RecA-like_Ycf2"/>
    <property type="match status" value="1"/>
</dbReference>
<dbReference type="Gene3D" id="3.40.50.300">
    <property type="entry name" value="P-loop containing nucleotide triphosphate hydrolases"/>
    <property type="match status" value="1"/>
</dbReference>
<dbReference type="HAMAP" id="MF_01330">
    <property type="entry name" value="Ycf2"/>
    <property type="match status" value="1"/>
</dbReference>
<dbReference type="InterPro" id="IPR003593">
    <property type="entry name" value="AAA+_ATPase"/>
</dbReference>
<dbReference type="InterPro" id="IPR003959">
    <property type="entry name" value="ATPase_AAA_core"/>
</dbReference>
<dbReference type="InterPro" id="IPR027417">
    <property type="entry name" value="P-loop_NTPase"/>
</dbReference>
<dbReference type="InterPro" id="IPR008543">
    <property type="entry name" value="Uncharacterised_Ycf2"/>
</dbReference>
<dbReference type="InterPro" id="IPR056777">
    <property type="entry name" value="Ycf2_N"/>
</dbReference>
<dbReference type="PANTHER" id="PTHR33078:SF51">
    <property type="entry name" value="PROTEIN TIC 214"/>
    <property type="match status" value="1"/>
</dbReference>
<dbReference type="PANTHER" id="PTHR33078">
    <property type="entry name" value="PROTEIN YCF2-RELATED"/>
    <property type="match status" value="1"/>
</dbReference>
<dbReference type="Pfam" id="PF00004">
    <property type="entry name" value="AAA"/>
    <property type="match status" value="1"/>
</dbReference>
<dbReference type="Pfam" id="PF05695">
    <property type="entry name" value="Ycf2"/>
    <property type="match status" value="1"/>
</dbReference>
<dbReference type="SMART" id="SM00382">
    <property type="entry name" value="AAA"/>
    <property type="match status" value="1"/>
</dbReference>
<dbReference type="SUPFAM" id="SSF52540">
    <property type="entry name" value="P-loop containing nucleoside triphosphate hydrolases"/>
    <property type="match status" value="1"/>
</dbReference>
<reference key="1">
    <citation type="journal article" date="2007" name="Mol. Phylogenet. Evol.">
        <title>Phylogenetic and evolutionary implications of complete chloroplast genome sequences of four early-diverging angiosperms: Buxus (Buxaceae), Chloranthus (Chloranthaceae), Dioscorea (Dioscoreaceae), and Illicium (Schisandraceae).</title>
        <authorList>
            <person name="Hansen D.R."/>
            <person name="Dastidar S.G."/>
            <person name="Cai Z."/>
            <person name="Penaflor C."/>
            <person name="Kuehl J.V."/>
            <person name="Boore J.L."/>
            <person name="Jansen R.K."/>
        </authorList>
    </citation>
    <scope>NUCLEOTIDE SEQUENCE [LARGE SCALE GENOMIC DNA]</scope>
</reference>
<organism>
    <name type="scientific">Buxus microphylla</name>
    <name type="common">Littleleaf boxwood</name>
    <name type="synonym">Japanese boxwood</name>
    <dbReference type="NCBI Taxonomy" id="153571"/>
    <lineage>
        <taxon>Eukaryota</taxon>
        <taxon>Viridiplantae</taxon>
        <taxon>Streptophyta</taxon>
        <taxon>Embryophyta</taxon>
        <taxon>Tracheophyta</taxon>
        <taxon>Spermatophyta</taxon>
        <taxon>Magnoliopsida</taxon>
        <taxon>Buxales</taxon>
        <taxon>Buxaceae</taxon>
        <taxon>Buxus</taxon>
    </lineage>
</organism>
<keyword id="KW-0067">ATP-binding</keyword>
<keyword id="KW-0150">Chloroplast</keyword>
<keyword id="KW-0547">Nucleotide-binding</keyword>
<keyword id="KW-0934">Plastid</keyword>
<accession>A6MM80</accession>
<proteinExistence type="inferred from homology"/>
<sequence length="2281" mass="267859">MKRHQFKSWIFELREILREIKNSHSFLDSWTKFDSVGSFTHIFFHQERFMNLFDPRIWSILLSRDSQGSTSNRYFTIKGVVLFVVTVLIYRINNRNMVERKNLYLMGLLPIPIPMNSIGPRNDTLEESFGSSNINRLIVSLLYLPKGKKISESCFLDPKESTWVLPITKKCIMPESNWGSRWWRNWIGKKRDSSCKISNETVAGIEISFKEKDIKYLEFLFVYYTDDPIRKDHDWELFDRLSPRKKRNIINFNSGQLFEILVKHWICYLMSAFREKRPIEVEGFFKQQGAESTIQSNDIEHVSHLFSRNKWGISLQNCAQFHMWQFRQDLFVSWGKNPHESDFLRKVSRENWIWLDNVWLVNKDRFFSKVRNVSSNIQYDSTRSIFVQVRDSSQLKGSSDQSRDHFDSIRNEDSEYHTLINQREIQQLKERSILWDPSFLQTERTEIESDRFPKCLSGYSSMSRLFTEREKQMNNHLLPEEIEEFLGNPTRSIRSFFSDRWSELHLGSNPTERSTRDQKLLKKQQDVSFVPSRRSENKEMVDIFKIITYLQNTVSIHPISSDPGCDMVPKDEPDMDSSNKISFLNKNPFLDLFHLFHDRNRGGYTLHHDFESEERFQEIADLFTLSITEPDLVYHKGFALSIDSYGLDQKKFLNEVFNSRDESKNKSLSLADPPIFYEENESFYRRIRKKSVRISCGNDLEDPKQKIVVFASNNIMEAVNQYRLIRNLIQIQYSTYGYIRNVSNRFFLMNRSDRNFEYGIQRDQIGNDTLNHRTIMKYMINQHLSNLKKSQKKWFDPLISRTERSMNRDPDAYRYKWSNGSKNFQEHFVSEQKSRFQVVFDRLRINQYSIDWSEVIDKKDLSKSLRFFLSKSLLFLSKSLLFLSKSLPFFFVSFGNIPIHRSEIHIYELKGPNDQLCNQLLESIGVQIVHLNKLKPFLLDTSQKSKFLINGGTISPFLFNKIQKWMIDSFHTRNNRRKSFDNTDSYFSMISHDRDNWLNPVKPFHRSSLISSFYKANRLRFLNNPHHFWFYCNKRFPFYVEKARINNYDLTYGQFLNILFIRNKIFSLCVGKKKHAFLERDTISPIESQVSNIFIPNDFPQGGDETYNLYKSFHFPIRSDPFVRRAIYSIADISGTPLTEGQIVNFERTYCQPLSDMNISDSEGKNFHQYLNFNSNMGLIHTPCSEKYLPSEKRKNRSLCLKKCVEKRQMYRTFQRDSAFSNLSKWNLFQTYMPWFLTSTGCKYLNFTLLDTFSDLLPILSSSKKFVSIFNDIMHGSDISWPIPQKKWCLPQWNLISEISSKCLHNLLLSEEMIHRNNESPVPLIWAHLRSPNAREFLYSILFLLLVAGYLVRTHLLFVSRASSELQTEFEKIKSLMIPSYMIELRKLLDRYPTSELNSFWLKNLFLVALEQLGDSLEEIRGSASGGNMLLGGGPAYGVKSIRSKKKYLNINLIDLISIIPNPINRITFSRNTRHLSRTSKEIYSLIRKRKNVNGDWIDDKIESWVANSDSIDDEEREFLVQFSTLTTEKRIDQILLSLTHSDHLSKNDSGYQMIEQPGSIYLRYLVDIHKKYLMNYEFNRSCLAERRIFLAHYQTITYSQTSCGANSFHFPSHGKPFSLRLALSPSRGILVIGSIGTGRSYLVKYLATNSYVPFITLFPNKFLDDKPKGYLIDDIDIDDSDDIDDSDDIYDSDDIDDLDTELLTMTNALTMYMTPKIDRFDITLQFELAKAMSPCIIWIPNIHDLYVNESNYLSLGLLVNYLSRDCERCSTRNILVIASTHTPQKVDPALIAPNKLNTCIKIRRLLIPQQRKHFFTLSYTRGFRLEKKMFHTNGFGSITMGSNARDLVALTNEALSISITQKKSIIDTNTIRSALHRQTWDLRSQVRSVRDHGILFYQIGRAVAQNVLLSNCPIDPISIYMKKKSCKEGDSYLYKWYFELGTSMKKLTILLYLLSCSAGSVAQDLWSLPGPDEKNWITSYGLVENDSDLVHGLLEVEGALVGSSRTEKDCSQFDNDRVTLLLRSEPRNPLDMMQNGSCSIVDQRFLYEKYESEFEEGEGALDPQQIEEDLFNHIVWAPRIWRPCGNLFDCIERPNELGFPYWARSFRGKQIIYHKEDELQENDSEFLQSGTMQYQTRDRSSKEQGFFRISQFIWDPADPFFFLFKDQPFVSVFSRREFFADEEMSKGLLTSQTNPPTSIYKRWFIKNTQEKHFELLIHRQRWLRTNSSLSNGSFRSNTLSESYQYLSNLFLSNGTLLDQMTKTLLRKRWLFPDEMKIGFM</sequence>
<protein>
    <recommendedName>
        <fullName evidence="1">Protein Ycf2</fullName>
    </recommendedName>
</protein>
<comment type="function">
    <text evidence="1">Probable ATPase of unknown function. Its presence in a non-photosynthetic plant (Epifagus virginiana) and experiments in tobacco indicate that it has an essential function which is probably not related to photosynthesis.</text>
</comment>
<comment type="subcellular location">
    <subcellularLocation>
        <location evidence="1">Plastid</location>
        <location evidence="1">Chloroplast stroma</location>
    </subcellularLocation>
</comment>
<comment type="similarity">
    <text evidence="1">Belongs to the Ycf2 family.</text>
</comment>
<name>YCF2_BUXMI</name>
<gene>
    <name evidence="1" type="primary">ycf2-A</name>
</gene>
<gene>
    <name evidence="1" type="primary">ycf2-B</name>
</gene>
<geneLocation type="chloroplast"/>
<feature type="chain" id="PRO_0000343760" description="Protein Ycf2">
    <location>
        <begin position="1"/>
        <end position="2281"/>
    </location>
</feature>
<feature type="binding site" evidence="1">
    <location>
        <begin position="1634"/>
        <end position="1641"/>
    </location>
    <ligand>
        <name>ATP</name>
        <dbReference type="ChEBI" id="CHEBI:30616"/>
    </ligand>
</feature>
<evidence type="ECO:0000255" key="1">
    <source>
        <dbReference type="HAMAP-Rule" id="MF_01330"/>
    </source>
</evidence>